<keyword id="KW-0963">Cytoplasm</keyword>
<keyword id="KW-0539">Nucleus</keyword>
<keyword id="KW-0653">Protein transport</keyword>
<keyword id="KW-0813">Transport</keyword>
<accession>E9ES90</accession>
<comment type="function">
    <text evidence="1">Involved in ubiquitin-mediated protein degradation. Regulatory factor in the ubiquitin/proteasome pathway that controls the turnover of proteasome substrates. Targets proteasomes to the nucleus and facilitates the degradation of nuclear proteins (By similarity).</text>
</comment>
<comment type="subunit">
    <text evidence="1">Binds the proteasome.</text>
</comment>
<comment type="subcellular location">
    <subcellularLocation>
        <location evidence="1">Cytoplasm</location>
    </subcellularLocation>
    <subcellularLocation>
        <location evidence="1">Nucleus</location>
    </subcellularLocation>
</comment>
<comment type="similarity">
    <text evidence="3">Belongs to the cut8/STS1 family.</text>
</comment>
<feature type="chain" id="PRO_0000409416" description="Tethering factor for nuclear proteasome STS1">
    <location>
        <begin position="1"/>
        <end position="301"/>
    </location>
</feature>
<feature type="region of interest" description="Disordered" evidence="2">
    <location>
        <begin position="1"/>
        <end position="56"/>
    </location>
</feature>
<reference key="1">
    <citation type="journal article" date="2011" name="PLoS Genet.">
        <title>Genome sequencing and comparative transcriptomics of the model entomopathogenic fungi Metarhizium anisopliae and M. acridum.</title>
        <authorList>
            <person name="Gao Q."/>
            <person name="Jin K."/>
            <person name="Ying S.-H."/>
            <person name="Zhang Y."/>
            <person name="Xiao G."/>
            <person name="Shang Y."/>
            <person name="Duan Z."/>
            <person name="Hu X."/>
            <person name="Xie X.-Q."/>
            <person name="Zhou G."/>
            <person name="Peng G."/>
            <person name="Luo Z."/>
            <person name="Huang W."/>
            <person name="Wang B."/>
            <person name="Fang W."/>
            <person name="Wang S."/>
            <person name="Zhong Y."/>
            <person name="Ma L.-J."/>
            <person name="St Leger R.J."/>
            <person name="Zhao G.-P."/>
            <person name="Pei Y."/>
            <person name="Feng M.-G."/>
            <person name="Xia Y."/>
            <person name="Wang C."/>
        </authorList>
    </citation>
    <scope>NUCLEOTIDE SEQUENCE [LARGE SCALE GENOMIC DNA]</scope>
    <source>
        <strain>ARSEF 23 / ATCC MYA-3075</strain>
    </source>
</reference>
<reference key="2">
    <citation type="journal article" date="2014" name="Proc. Natl. Acad. Sci. U.S.A.">
        <title>Trajectory and genomic determinants of fungal-pathogen speciation and host adaptation.</title>
        <authorList>
            <person name="Hu X."/>
            <person name="Xiao G."/>
            <person name="Zheng P."/>
            <person name="Shang Y."/>
            <person name="Su Y."/>
            <person name="Zhang X."/>
            <person name="Liu X."/>
            <person name="Zhan S."/>
            <person name="St Leger R.J."/>
            <person name="Wang C."/>
        </authorList>
    </citation>
    <scope>GENOME REANNOTATION</scope>
    <source>
        <strain>ARSEF 23 / ATCC MYA-3075</strain>
    </source>
</reference>
<evidence type="ECO:0000250" key="1"/>
<evidence type="ECO:0000256" key="2">
    <source>
        <dbReference type="SAM" id="MobiDB-lite"/>
    </source>
</evidence>
<evidence type="ECO:0000305" key="3"/>
<sequence length="301" mass="33214">MNVLLSPQPPVFPHHHENPRLSPQRSVSPLLGMSNRKRKADDDGDETMSPLSSPAISARPLVRPSKKVRSNELIGRPLPLPRLLETLDASQLRMVLERLCERHPDIGQEVVVGAPRPSVLSALDVLQDYHVKLKEAIPYGESSPEYTYYRVKEPLIALIDALSDFTPQYLPPMETQPTTSLQFLDGATKLIHDLPNWEPQAYRHHKESAYDDISRAWALVITEAGKRGGGLNLHTGGWDQTLSRHNEQSGGRLGTAMSAMASSVGWMGPGLSTQGNPSEQNSILNRLMSGSYGSPVRVGPW</sequence>
<organism>
    <name type="scientific">Metarhizium robertsii (strain ARSEF 23 / ATCC MYA-3075)</name>
    <name type="common">Metarhizium anisopliae (strain ARSEF 23)</name>
    <dbReference type="NCBI Taxonomy" id="655844"/>
    <lineage>
        <taxon>Eukaryota</taxon>
        <taxon>Fungi</taxon>
        <taxon>Dikarya</taxon>
        <taxon>Ascomycota</taxon>
        <taxon>Pezizomycotina</taxon>
        <taxon>Sordariomycetes</taxon>
        <taxon>Hypocreomycetidae</taxon>
        <taxon>Hypocreales</taxon>
        <taxon>Clavicipitaceae</taxon>
        <taxon>Metarhizium</taxon>
    </lineage>
</organism>
<dbReference type="EMBL" id="ADNJ02000004">
    <property type="protein sequence ID" value="EFZ01607.1"/>
    <property type="molecule type" value="Genomic_DNA"/>
</dbReference>
<dbReference type="RefSeq" id="XP_007819025.1">
    <property type="nucleotide sequence ID" value="XM_007820834.1"/>
</dbReference>
<dbReference type="SMR" id="E9ES90"/>
<dbReference type="GeneID" id="19257122"/>
<dbReference type="KEGG" id="maj:MAA_02836"/>
<dbReference type="HOGENOM" id="CLU_033658_0_0_1"/>
<dbReference type="OrthoDB" id="10061064at2759"/>
<dbReference type="Proteomes" id="UP000002498">
    <property type="component" value="Unassembled WGS sequence"/>
</dbReference>
<dbReference type="GO" id="GO:0005737">
    <property type="term" value="C:cytoplasm"/>
    <property type="evidence" value="ECO:0007669"/>
    <property type="project" value="UniProtKB-SubCell"/>
</dbReference>
<dbReference type="GO" id="GO:0031965">
    <property type="term" value="C:nuclear membrane"/>
    <property type="evidence" value="ECO:0007669"/>
    <property type="project" value="TreeGrafter"/>
</dbReference>
<dbReference type="GO" id="GO:0070628">
    <property type="term" value="F:proteasome binding"/>
    <property type="evidence" value="ECO:0007669"/>
    <property type="project" value="TreeGrafter"/>
</dbReference>
<dbReference type="GO" id="GO:0071630">
    <property type="term" value="P:nuclear protein quality control by the ubiquitin-proteasome system"/>
    <property type="evidence" value="ECO:0007669"/>
    <property type="project" value="InterPro"/>
</dbReference>
<dbReference type="GO" id="GO:0031144">
    <property type="term" value="P:proteasome localization"/>
    <property type="evidence" value="ECO:0007669"/>
    <property type="project" value="InterPro"/>
</dbReference>
<dbReference type="GO" id="GO:0015031">
    <property type="term" value="P:protein transport"/>
    <property type="evidence" value="ECO:0007669"/>
    <property type="project" value="UniProtKB-KW"/>
</dbReference>
<dbReference type="FunFam" id="1.20.58.1590:FF:000001">
    <property type="entry name" value="Tethering factor for nuclear proteasome STS1"/>
    <property type="match status" value="1"/>
</dbReference>
<dbReference type="Gene3D" id="1.20.58.1590">
    <property type="entry name" value="Tethering factor for nuclear proteasome Cut8/Sts1"/>
    <property type="match status" value="1"/>
</dbReference>
<dbReference type="InterPro" id="IPR013868">
    <property type="entry name" value="Cut8/Sts1_fam"/>
</dbReference>
<dbReference type="InterPro" id="IPR038422">
    <property type="entry name" value="Cut8/Sts1_sf"/>
</dbReference>
<dbReference type="PANTHER" id="PTHR28032">
    <property type="entry name" value="FI02826P"/>
    <property type="match status" value="1"/>
</dbReference>
<dbReference type="PANTHER" id="PTHR28032:SF1">
    <property type="entry name" value="FI02826P"/>
    <property type="match status" value="1"/>
</dbReference>
<dbReference type="Pfam" id="PF08559">
    <property type="entry name" value="Cut8"/>
    <property type="match status" value="1"/>
</dbReference>
<gene>
    <name type="primary">STS1</name>
    <name type="ORF">MAA_02836</name>
</gene>
<protein>
    <recommendedName>
        <fullName>Tethering factor for nuclear proteasome STS1</fullName>
    </recommendedName>
</protein>
<proteinExistence type="inferred from homology"/>
<name>STS1_METRA</name>